<keyword id="KW-0687">Ribonucleoprotein</keyword>
<keyword id="KW-0689">Ribosomal protein</keyword>
<keyword id="KW-0694">RNA-binding</keyword>
<keyword id="KW-0699">rRNA-binding</keyword>
<feature type="chain" id="PRO_1000052443" description="Large ribosomal subunit protein uL4">
    <location>
        <begin position="1"/>
        <end position="223"/>
    </location>
</feature>
<feature type="region of interest" description="Disordered" evidence="2">
    <location>
        <begin position="49"/>
        <end position="106"/>
    </location>
</feature>
<proteinExistence type="inferred from homology"/>
<name>RL4_MYCBP</name>
<comment type="function">
    <text evidence="1">One of the primary rRNA binding proteins, this protein initially binds near the 5'-end of the 23S rRNA. It is important during the early stages of 50S assembly. It makes multiple contacts with different domains of the 23S rRNA in the assembled 50S subunit and ribosome.</text>
</comment>
<comment type="function">
    <text evidence="1">Forms part of the polypeptide exit tunnel.</text>
</comment>
<comment type="subunit">
    <text evidence="1">Part of the 50S ribosomal subunit.</text>
</comment>
<comment type="similarity">
    <text evidence="1">Belongs to the universal ribosomal protein uL4 family.</text>
</comment>
<dbReference type="EMBL" id="AM408590">
    <property type="protein sequence ID" value="CAL70738.1"/>
    <property type="molecule type" value="Genomic_DNA"/>
</dbReference>
<dbReference type="RefSeq" id="WP_003403580.1">
    <property type="nucleotide sequence ID" value="NC_008769.1"/>
</dbReference>
<dbReference type="SMR" id="A1KGI3"/>
<dbReference type="KEGG" id="mbb:BCG_0752"/>
<dbReference type="HOGENOM" id="CLU_041575_5_0_11"/>
<dbReference type="Proteomes" id="UP000001472">
    <property type="component" value="Chromosome"/>
</dbReference>
<dbReference type="GO" id="GO:1990904">
    <property type="term" value="C:ribonucleoprotein complex"/>
    <property type="evidence" value="ECO:0007669"/>
    <property type="project" value="UniProtKB-KW"/>
</dbReference>
<dbReference type="GO" id="GO:0005840">
    <property type="term" value="C:ribosome"/>
    <property type="evidence" value="ECO:0007669"/>
    <property type="project" value="UniProtKB-KW"/>
</dbReference>
<dbReference type="GO" id="GO:0019843">
    <property type="term" value="F:rRNA binding"/>
    <property type="evidence" value="ECO:0007669"/>
    <property type="project" value="UniProtKB-UniRule"/>
</dbReference>
<dbReference type="GO" id="GO:0003735">
    <property type="term" value="F:structural constituent of ribosome"/>
    <property type="evidence" value="ECO:0007669"/>
    <property type="project" value="InterPro"/>
</dbReference>
<dbReference type="GO" id="GO:0006412">
    <property type="term" value="P:translation"/>
    <property type="evidence" value="ECO:0007669"/>
    <property type="project" value="UniProtKB-UniRule"/>
</dbReference>
<dbReference type="FunFam" id="3.40.1370.10:FF:000004">
    <property type="entry name" value="50S ribosomal protein L4"/>
    <property type="match status" value="1"/>
</dbReference>
<dbReference type="Gene3D" id="3.40.1370.10">
    <property type="match status" value="1"/>
</dbReference>
<dbReference type="HAMAP" id="MF_01328_B">
    <property type="entry name" value="Ribosomal_uL4_B"/>
    <property type="match status" value="1"/>
</dbReference>
<dbReference type="InterPro" id="IPR002136">
    <property type="entry name" value="Ribosomal_uL4"/>
</dbReference>
<dbReference type="InterPro" id="IPR013005">
    <property type="entry name" value="Ribosomal_uL4-like"/>
</dbReference>
<dbReference type="InterPro" id="IPR023574">
    <property type="entry name" value="Ribosomal_uL4_dom_sf"/>
</dbReference>
<dbReference type="NCBIfam" id="TIGR03953">
    <property type="entry name" value="rplD_bact"/>
    <property type="match status" value="1"/>
</dbReference>
<dbReference type="PANTHER" id="PTHR10746">
    <property type="entry name" value="50S RIBOSOMAL PROTEIN L4"/>
    <property type="match status" value="1"/>
</dbReference>
<dbReference type="PANTHER" id="PTHR10746:SF6">
    <property type="entry name" value="LARGE RIBOSOMAL SUBUNIT PROTEIN UL4M"/>
    <property type="match status" value="1"/>
</dbReference>
<dbReference type="Pfam" id="PF00573">
    <property type="entry name" value="Ribosomal_L4"/>
    <property type="match status" value="1"/>
</dbReference>
<dbReference type="SUPFAM" id="SSF52166">
    <property type="entry name" value="Ribosomal protein L4"/>
    <property type="match status" value="1"/>
</dbReference>
<reference key="1">
    <citation type="journal article" date="2007" name="Proc. Natl. Acad. Sci. U.S.A.">
        <title>Genome plasticity of BCG and impact on vaccine efficacy.</title>
        <authorList>
            <person name="Brosch R."/>
            <person name="Gordon S.V."/>
            <person name="Garnier T."/>
            <person name="Eiglmeier K."/>
            <person name="Frigui W."/>
            <person name="Valenti P."/>
            <person name="Dos Santos S."/>
            <person name="Duthoy S."/>
            <person name="Lacroix C."/>
            <person name="Garcia-Pelayo C."/>
            <person name="Inwald J.K."/>
            <person name="Golby P."/>
            <person name="Garcia J.N."/>
            <person name="Hewinson R.G."/>
            <person name="Behr M.A."/>
            <person name="Quail M.A."/>
            <person name="Churcher C."/>
            <person name="Barrell B.G."/>
            <person name="Parkhill J."/>
            <person name="Cole S.T."/>
        </authorList>
    </citation>
    <scope>NUCLEOTIDE SEQUENCE [LARGE SCALE GENOMIC DNA]</scope>
    <source>
        <strain>BCG / Pasteur 1173P2</strain>
    </source>
</reference>
<protein>
    <recommendedName>
        <fullName evidence="1">Large ribosomal subunit protein uL4</fullName>
    </recommendedName>
    <alternativeName>
        <fullName evidence="3">50S ribosomal protein L4</fullName>
    </alternativeName>
</protein>
<organism>
    <name type="scientific">Mycobacterium bovis (strain BCG / Pasteur 1173P2)</name>
    <dbReference type="NCBI Taxonomy" id="410289"/>
    <lineage>
        <taxon>Bacteria</taxon>
        <taxon>Bacillati</taxon>
        <taxon>Actinomycetota</taxon>
        <taxon>Actinomycetes</taxon>
        <taxon>Mycobacteriales</taxon>
        <taxon>Mycobacteriaceae</taxon>
        <taxon>Mycobacterium</taxon>
        <taxon>Mycobacterium tuberculosis complex</taxon>
    </lineage>
</organism>
<accession>A1KGI3</accession>
<evidence type="ECO:0000255" key="1">
    <source>
        <dbReference type="HAMAP-Rule" id="MF_01328"/>
    </source>
</evidence>
<evidence type="ECO:0000256" key="2">
    <source>
        <dbReference type="SAM" id="MobiDB-lite"/>
    </source>
</evidence>
<evidence type="ECO:0000305" key="3"/>
<sequence length="223" mass="23743">MAAQEQKTLKIDVKTPAGKVDGAIELPAELFDVPANIALMHQVVTAQRAAARQGTHSTKTRGEVSGGGRKPYRQKGTGRARQGSTRAPQFTGGGVVHGPKPRDYSQRTPKKMIAAALRGALSDRARNGRIHAITELVEGQNPSTKSARAFLASLTERKQVLVVIGRSDEAGAKSVRNLPGVHILAPDQLNTYDVLRADDVVFSVEALNAYIAANTTTSEEVSA</sequence>
<gene>
    <name evidence="1" type="primary">rplD</name>
    <name type="ordered locus">BCG_0752</name>
</gene>